<name>MPPA2_ARATH</name>
<evidence type="ECO:0000250" key="1">
    <source>
        <dbReference type="UniProtKB" id="P07257"/>
    </source>
</evidence>
<evidence type="ECO:0000250" key="2">
    <source>
        <dbReference type="UniProtKB" id="P11914"/>
    </source>
</evidence>
<evidence type="ECO:0000269" key="3">
    <source>
    </source>
</evidence>
<evidence type="ECO:0000269" key="4">
    <source>
    </source>
</evidence>
<evidence type="ECO:0000269" key="5">
    <source>
    </source>
</evidence>
<evidence type="ECO:0000269" key="6">
    <source>
    </source>
</evidence>
<evidence type="ECO:0000269" key="7">
    <source>
    </source>
</evidence>
<evidence type="ECO:0000305" key="8"/>
<evidence type="ECO:0000312" key="9">
    <source>
        <dbReference type="Araport" id="AT3G16480"/>
    </source>
</evidence>
<evidence type="ECO:0000312" key="10">
    <source>
        <dbReference type="EMBL" id="AAB63629.1"/>
    </source>
</evidence>
<evidence type="ECO:0000312" key="11">
    <source>
        <dbReference type="EMBL" id="BAB01147.1"/>
    </source>
</evidence>
<gene>
    <name type="primary">MPPalpha2</name>
    <name evidence="9" type="ordered locus">At3g16480</name>
    <name evidence="11" type="ORF">MDC8.11</name>
    <name evidence="10" type="ORF">T02O04.2</name>
</gene>
<keyword id="KW-0150">Chloroplast</keyword>
<keyword id="KW-0472">Membrane</keyword>
<keyword id="KW-0496">Mitochondrion</keyword>
<keyword id="KW-0999">Mitochondrion inner membrane</keyword>
<keyword id="KW-0934">Plastid</keyword>
<keyword id="KW-1185">Reference proteome</keyword>
<keyword id="KW-0809">Transit peptide</keyword>
<reference key="1">
    <citation type="journal article" date="2000" name="Nature">
        <title>Sequence and analysis of chromosome 3 of the plant Arabidopsis thaliana.</title>
        <authorList>
            <person name="Salanoubat M."/>
            <person name="Lemcke K."/>
            <person name="Rieger M."/>
            <person name="Ansorge W."/>
            <person name="Unseld M."/>
            <person name="Fartmann B."/>
            <person name="Valle G."/>
            <person name="Bloecker H."/>
            <person name="Perez-Alonso M."/>
            <person name="Obermaier B."/>
            <person name="Delseny M."/>
            <person name="Boutry M."/>
            <person name="Grivell L.A."/>
            <person name="Mache R."/>
            <person name="Puigdomenech P."/>
            <person name="De Simone V."/>
            <person name="Choisne N."/>
            <person name="Artiguenave F."/>
            <person name="Robert C."/>
            <person name="Brottier P."/>
            <person name="Wincker P."/>
            <person name="Cattolico L."/>
            <person name="Weissenbach J."/>
            <person name="Saurin W."/>
            <person name="Quetier F."/>
            <person name="Schaefer M."/>
            <person name="Mueller-Auer S."/>
            <person name="Gabel C."/>
            <person name="Fuchs M."/>
            <person name="Benes V."/>
            <person name="Wurmbach E."/>
            <person name="Drzonek H."/>
            <person name="Erfle H."/>
            <person name="Jordan N."/>
            <person name="Bangert S."/>
            <person name="Wiedelmann R."/>
            <person name="Kranz H."/>
            <person name="Voss H."/>
            <person name="Holland R."/>
            <person name="Brandt P."/>
            <person name="Nyakatura G."/>
            <person name="Vezzi A."/>
            <person name="D'Angelo M."/>
            <person name="Pallavicini A."/>
            <person name="Toppo S."/>
            <person name="Simionati B."/>
            <person name="Conrad A."/>
            <person name="Hornischer K."/>
            <person name="Kauer G."/>
            <person name="Loehnert T.-H."/>
            <person name="Nordsiek G."/>
            <person name="Reichelt J."/>
            <person name="Scharfe M."/>
            <person name="Schoen O."/>
            <person name="Bargues M."/>
            <person name="Terol J."/>
            <person name="Climent J."/>
            <person name="Navarro P."/>
            <person name="Collado C."/>
            <person name="Perez-Perez A."/>
            <person name="Ottenwaelder B."/>
            <person name="Duchemin D."/>
            <person name="Cooke R."/>
            <person name="Laudie M."/>
            <person name="Berger-Llauro C."/>
            <person name="Purnelle B."/>
            <person name="Masuy D."/>
            <person name="de Haan M."/>
            <person name="Maarse A.C."/>
            <person name="Alcaraz J.-P."/>
            <person name="Cottet A."/>
            <person name="Casacuberta E."/>
            <person name="Monfort A."/>
            <person name="Argiriou A."/>
            <person name="Flores M."/>
            <person name="Liguori R."/>
            <person name="Vitale D."/>
            <person name="Mannhaupt G."/>
            <person name="Haase D."/>
            <person name="Schoof H."/>
            <person name="Rudd S."/>
            <person name="Zaccaria P."/>
            <person name="Mewes H.-W."/>
            <person name="Mayer K.F.X."/>
            <person name="Kaul S."/>
            <person name="Town C.D."/>
            <person name="Koo H.L."/>
            <person name="Tallon L.J."/>
            <person name="Jenkins J."/>
            <person name="Rooney T."/>
            <person name="Rizzo M."/>
            <person name="Walts A."/>
            <person name="Utterback T."/>
            <person name="Fujii C.Y."/>
            <person name="Shea T.P."/>
            <person name="Creasy T.H."/>
            <person name="Haas B."/>
            <person name="Maiti R."/>
            <person name="Wu D."/>
            <person name="Peterson J."/>
            <person name="Van Aken S."/>
            <person name="Pai G."/>
            <person name="Militscher J."/>
            <person name="Sellers P."/>
            <person name="Gill J.E."/>
            <person name="Feldblyum T.V."/>
            <person name="Preuss D."/>
            <person name="Lin X."/>
            <person name="Nierman W.C."/>
            <person name="Salzberg S.L."/>
            <person name="White O."/>
            <person name="Venter J.C."/>
            <person name="Fraser C.M."/>
            <person name="Kaneko T."/>
            <person name="Nakamura Y."/>
            <person name="Sato S."/>
            <person name="Kato T."/>
            <person name="Asamizu E."/>
            <person name="Sasamoto S."/>
            <person name="Kimura T."/>
            <person name="Idesawa K."/>
            <person name="Kawashima K."/>
            <person name="Kishida Y."/>
            <person name="Kiyokawa C."/>
            <person name="Kohara M."/>
            <person name="Matsumoto M."/>
            <person name="Matsuno A."/>
            <person name="Muraki A."/>
            <person name="Nakayama S."/>
            <person name="Nakazaki N."/>
            <person name="Shinpo S."/>
            <person name="Takeuchi C."/>
            <person name="Wada T."/>
            <person name="Watanabe A."/>
            <person name="Yamada M."/>
            <person name="Yasuda M."/>
            <person name="Tabata S."/>
        </authorList>
    </citation>
    <scope>NUCLEOTIDE SEQUENCE [LARGE SCALE GENOMIC DNA]</scope>
    <source>
        <strain>cv. Columbia</strain>
    </source>
</reference>
<reference key="2">
    <citation type="journal article" date="2000" name="DNA Res.">
        <title>Structural analysis of Arabidopsis thaliana chromosome 3. II. Sequence features of the 4,251,695 bp regions covered by 90 P1, TAC and BAC clones.</title>
        <authorList>
            <person name="Kaneko T."/>
            <person name="Katoh T."/>
            <person name="Sato S."/>
            <person name="Nakamura Y."/>
            <person name="Asamizu E."/>
            <person name="Tabata S."/>
        </authorList>
    </citation>
    <scope>NUCLEOTIDE SEQUENCE [LARGE SCALE GENOMIC DNA]</scope>
    <source>
        <strain>cv. Columbia</strain>
    </source>
</reference>
<reference key="3">
    <citation type="journal article" date="2017" name="Plant J.">
        <title>Araport11: a complete reannotation of the Arabidopsis thaliana reference genome.</title>
        <authorList>
            <person name="Cheng C.Y."/>
            <person name="Krishnakumar V."/>
            <person name="Chan A.P."/>
            <person name="Thibaud-Nissen F."/>
            <person name="Schobel S."/>
            <person name="Town C.D."/>
        </authorList>
    </citation>
    <scope>GENOME REANNOTATION</scope>
    <source>
        <strain>cv. Columbia</strain>
    </source>
</reference>
<reference key="4">
    <citation type="journal article" date="2003" name="Science">
        <title>Empirical analysis of transcriptional activity in the Arabidopsis genome.</title>
        <authorList>
            <person name="Yamada K."/>
            <person name="Lim J."/>
            <person name="Dale J.M."/>
            <person name="Chen H."/>
            <person name="Shinn P."/>
            <person name="Palm C.J."/>
            <person name="Southwick A.M."/>
            <person name="Wu H.C."/>
            <person name="Kim C.J."/>
            <person name="Nguyen M."/>
            <person name="Pham P.K."/>
            <person name="Cheuk R.F."/>
            <person name="Karlin-Newmann G."/>
            <person name="Liu S.X."/>
            <person name="Lam B."/>
            <person name="Sakano H."/>
            <person name="Wu T."/>
            <person name="Yu G."/>
            <person name="Miranda M."/>
            <person name="Quach H.L."/>
            <person name="Tripp M."/>
            <person name="Chang C.H."/>
            <person name="Lee J.M."/>
            <person name="Toriumi M.J."/>
            <person name="Chan M.M."/>
            <person name="Tang C.C."/>
            <person name="Onodera C.S."/>
            <person name="Deng J.M."/>
            <person name="Akiyama K."/>
            <person name="Ansari Y."/>
            <person name="Arakawa T."/>
            <person name="Banh J."/>
            <person name="Banno F."/>
            <person name="Bowser L."/>
            <person name="Brooks S.Y."/>
            <person name="Carninci P."/>
            <person name="Chao Q."/>
            <person name="Choy N."/>
            <person name="Enju A."/>
            <person name="Goldsmith A.D."/>
            <person name="Gurjal M."/>
            <person name="Hansen N.F."/>
            <person name="Hayashizaki Y."/>
            <person name="Johnson-Hopson C."/>
            <person name="Hsuan V.W."/>
            <person name="Iida K."/>
            <person name="Karnes M."/>
            <person name="Khan S."/>
            <person name="Koesema E."/>
            <person name="Ishida J."/>
            <person name="Jiang P.X."/>
            <person name="Jones T."/>
            <person name="Kawai J."/>
            <person name="Kamiya A."/>
            <person name="Meyers C."/>
            <person name="Nakajima M."/>
            <person name="Narusaka M."/>
            <person name="Seki M."/>
            <person name="Sakurai T."/>
            <person name="Satou M."/>
            <person name="Tamse R."/>
            <person name="Vaysberg M."/>
            <person name="Wallender E.K."/>
            <person name="Wong C."/>
            <person name="Yamamura Y."/>
            <person name="Yuan S."/>
            <person name="Shinozaki K."/>
            <person name="Davis R.W."/>
            <person name="Theologis A."/>
            <person name="Ecker J.R."/>
        </authorList>
    </citation>
    <scope>NUCLEOTIDE SEQUENCE [LARGE SCALE MRNA]</scope>
    <source>
        <strain>cv. Columbia</strain>
    </source>
</reference>
<reference key="5">
    <citation type="journal article" date="2009" name="DNA Res.">
        <title>Analysis of multiple occurrences of alternative splicing events in Arabidopsis thaliana using novel sequenced full-length cDNAs.</title>
        <authorList>
            <person name="Iida K."/>
            <person name="Fukami-Kobayashi K."/>
            <person name="Toyoda A."/>
            <person name="Sakaki Y."/>
            <person name="Kobayashi M."/>
            <person name="Seki M."/>
            <person name="Shinozaki K."/>
        </authorList>
    </citation>
    <scope>NUCLEOTIDE SEQUENCE [LARGE SCALE MRNA] OF 350-499</scope>
    <source>
        <strain>cv. Columbia</strain>
        <tissue>Flower</tissue>
        <tissue>Silique</tissue>
    </source>
</reference>
<reference key="6">
    <citation type="journal article" date="2003" name="Plant Physiol.">
        <title>New insights into the respiratory chain of plant mitochondria. Supercomplexes and a unique composition of complex II.</title>
        <authorList>
            <person name="Eubel H."/>
            <person name="Jansch L."/>
            <person name="Braun H.P."/>
        </authorList>
    </citation>
    <scope>SUBUNIT</scope>
</reference>
<reference key="7">
    <citation type="journal article" date="2004" name="Plant Cell">
        <title>Experimental analysis of the Arabidopsis mitochondrial proteome highlights signaling and regulatory components, provides assessment of targeting prediction programs, and indicates plant-specific mitochondrial proteins.</title>
        <authorList>
            <person name="Heazlewood J.L."/>
            <person name="Tonti-Filippini J.S."/>
            <person name="Gout A.M."/>
            <person name="Day D.A."/>
            <person name="Whelan J."/>
            <person name="Millar A.H."/>
        </authorList>
    </citation>
    <scope>IDENTIFICATION BY MASS SPECTROMETRY</scope>
    <scope>SUBCELLULAR LOCATION [LARGE SCALE ANALYSIS]</scope>
    <source>
        <strain>cv. Landsberg erecta</strain>
    </source>
</reference>
<reference key="8">
    <citation type="journal article" date="2008" name="J. Proteome Res.">
        <title>Resolving and identifying protein components of plant mitochondrial respiratory complexes using three dimensions of gel electrophoresis.</title>
        <authorList>
            <person name="Meyer E.H."/>
            <person name="Taylor N.L."/>
            <person name="Millar A.H."/>
        </authorList>
    </citation>
    <scope>SUBCELLULAR LOCATION</scope>
    <scope>SUBUNIT</scope>
    <scope>IDENTIFICATION BY MASS SPECTROMETRY</scope>
</reference>
<reference key="9">
    <citation type="journal article" date="2008" name="Plant Physiol.">
        <title>Arabidopsis PPR40 connects abiotic stress responses to mitochondrial electron transport.</title>
        <authorList>
            <person name="Zsigmond L."/>
            <person name="Rigo G."/>
            <person name="Szarka A."/>
            <person name="Szekely G."/>
            <person name="Oetvoes K."/>
            <person name="Darula Z."/>
            <person name="Medzihradszky K.F."/>
            <person name="Koncz C."/>
            <person name="Koncz Z."/>
            <person name="Szabados L."/>
        </authorList>
    </citation>
    <scope>SUBUNIT</scope>
    <scope>IDENTIFICATION BY MASS SPECTROMETRY</scope>
    <scope>NOMENCLATURE</scope>
    <source>
        <strain>cv. Columbia</strain>
    </source>
</reference>
<reference key="10">
    <citation type="journal article" date="2012" name="Mol. Plant">
        <title>Dual targeting of a processing peptidase into both endosymbiotic organelles mediated by a transport signal of unusual architecture.</title>
        <authorList>
            <person name="Baudisch B."/>
            <person name="Kloesgen R.B."/>
        </authorList>
    </citation>
    <scope>SUBCELLULAR LOCATION</scope>
</reference>
<reference key="11">
    <citation type="journal article" date="2012" name="Plant Cell">
        <title>Dual location of the mitochondrial preprotein transporters B14.7 and Tim23-2 in complex I and the TIM17:23 complex in Arabidopsis links mitochondrial activity and biogenesis.</title>
        <authorList>
            <person name="Wang Y."/>
            <person name="Carrie C."/>
            <person name="Giraud E."/>
            <person name="Elhafez D."/>
            <person name="Narsai R."/>
            <person name="Duncan O."/>
            <person name="Whelan J."/>
            <person name="Murcha M.W."/>
        </authorList>
    </citation>
    <scope>INTERACTION WITH TIM23-2</scope>
</reference>
<feature type="transit peptide" description="Chloroplast and mitochondrion" evidence="6">
    <location>
        <begin position="1"/>
        <end status="unknown"/>
    </location>
</feature>
<feature type="chain" id="PRO_0000026775" description="Probable mitochondrial-processing peptidase subunit alpha-2, chloroplastic/mitochondrial">
    <location>
        <begin status="unknown"/>
        <end position="499"/>
    </location>
</feature>
<feature type="sequence conflict" description="In Ref. 4; AAK59675." evidence="8" ref="4">
    <original>T</original>
    <variation>K</variation>
    <location>
        <position position="304"/>
    </location>
</feature>
<accession>O04308</accession>
<accession>B9DHQ2</accession>
<accession>Q94C54</accession>
<proteinExistence type="evidence at protein level"/>
<sequence>MYRTAASRAKALKGILNHNFRASRYASSSAVATSSSSSSWLSGGYSSSLPSMNIPLAGVSLPPPLSDHVEPSKLKTTTLPNGLTIATEMSPNPAASIGLYVDCGSIYETPQFRGATHLLERMAFKSTLNRSHFRLVREIEAIGGNTSASASREQMGYTIDALKTYVPEMVEVLIDSVRNPAFLDWEVNEELRKVKVEIGEFATNPMGFLLEAVHSAGYSGALANPLYAPESAITGLTGEVLENFVFENYTASRMVLAASGVDHEELLKVVEPLLSDLPNVPRPAEPKSQYVGGDFRQHTGGEATHFALAFEVPGWNNEKEAIIATVLQMLMGGGGSFSAGGPGKGMHSWLYLRLLNQHQQFQSCTAFTSVFNNTGLFGIYGCTSPEFASQGIELVASEMNAVADGKVNQKHLDRAKAATKSAILMNLESRMIAAEDIGRQILTYGERKPVDQFLKTVDQLTLKDIADFTSKVITKPLTMATFGDVLNVPSYDSVSKRFR</sequence>
<comment type="function">
    <text evidence="2">Substrate recognition and binding subunit of the essential mitochondrial processing protease (MPP), which cleaves the mitochondrial sequence off newly imported precursors proteins.</text>
</comment>
<comment type="function">
    <text evidence="1">Component of the ubiquinol-cytochrome c oxidoreductase, a multisubunit transmembrane complex that is part of the mitochondrial electron transport chain which drives oxidative phosphorylation. The respiratory chain contains 3 multisubunit complexes succinate dehydrogenase (complex II, CII), ubiquinol-cytochrome c oxidoreductase (cytochrome b-c1 complex, complex III, CIII) and cytochrome c oxidase (complex IV, CIV), that cooperate to transfer electrons derived from NADH and succinate to molecular oxygen, creating an electrochemical gradient over the inner membrane that drives transmembrane transport and the ATP synthase. The cytochrome b-c1 complex catalyzes electron transfer from ubiquinol to cytochrome c, linking this redox reaction to translocation of protons across the mitochondrial inner membrane, with protons being carried across the membrane as hydrogens on the quinol. In the process called Q cycle, 2 protons are consumed from the matrix, 4 protons are released into the intermembrane space and 2 electrons are passed to cytochrome c.</text>
</comment>
<comment type="subunit">
    <text evidence="2 3 4 5 7">Heterodimer of alpha and beta subunits, forming the mitochondrial processing protease (MPP) in which subunit alpha is involved in substrate recognition and binding and subunit beta is the catalytic subunit (By similarity). Component of the ubiquinol-cytochrome c oxidoreductase (cytochrome b-c1 complex, complex III, CIII), a multisubunit enzyme composed of 10 subunits. The complex is composed of 3 respiratory subunits cytochrome b (MT-CYB), cytochrome c1 (CYC1-1 or CYC1-2) and Rieske protein (UCR1-1 or UCR1-2), 2 core protein subunits MPPalpha1 (or MPPalpha2) and MPPB, and 5 low-molecular weight protein subunits QCR7-1 (or QCR7-2), UCRQ-1 (or UCRQ-2), QCR9, UCRY and probably QCR6-1 (or QCR6-2) (PubMed:18189341, PubMed:18305213). The complex exists as an obligatory dimer and forms supercomplexes (SCs) in the inner mitochondrial membrane with NADH-ubiquinone oxidoreductase (complex I, CI), resulting in different assemblies (supercomplexes SCI(1)III(2) and SCI(2)III(4)) (PubMed:12970493). Interacts with TIM23-2 (PubMed:22730406).</text>
</comment>
<comment type="subcellular location">
    <subcellularLocation>
        <location evidence="6">Plastid</location>
        <location evidence="6">Chloroplast stroma</location>
    </subcellularLocation>
    <subcellularLocation>
        <location evidence="6">Mitochondrion matrix</location>
    </subcellularLocation>
    <subcellularLocation>
        <location evidence="4 6">Mitochondrion inner membrane</location>
        <topology evidence="1">Peripheral membrane protein</topology>
        <orientation evidence="1">Matrix side</orientation>
    </subcellularLocation>
</comment>
<comment type="similarity">
    <text evidence="8">Belongs to the peptidase M16 family.</text>
</comment>
<comment type="caution">
    <text evidence="8">Does not seem to have a protease activity as it lacks one of the conserved zinc-binding sites.</text>
</comment>
<organism>
    <name type="scientific">Arabidopsis thaliana</name>
    <name type="common">Mouse-ear cress</name>
    <dbReference type="NCBI Taxonomy" id="3702"/>
    <lineage>
        <taxon>Eukaryota</taxon>
        <taxon>Viridiplantae</taxon>
        <taxon>Streptophyta</taxon>
        <taxon>Embryophyta</taxon>
        <taxon>Tracheophyta</taxon>
        <taxon>Spermatophyta</taxon>
        <taxon>Magnoliopsida</taxon>
        <taxon>eudicotyledons</taxon>
        <taxon>Gunneridae</taxon>
        <taxon>Pentapetalae</taxon>
        <taxon>rosids</taxon>
        <taxon>malvids</taxon>
        <taxon>Brassicales</taxon>
        <taxon>Brassicaceae</taxon>
        <taxon>Camelineae</taxon>
        <taxon>Arabidopsis</taxon>
    </lineage>
</organism>
<protein>
    <recommendedName>
        <fullName>Probable mitochondrial-processing peptidase subunit alpha-2, chloroplastic/mitochondrial</fullName>
    </recommendedName>
    <alternativeName>
        <fullName>Alpha-MPP 2</fullName>
    </alternativeName>
    <alternativeName>
        <fullName>Complex III subunit II</fullName>
    </alternativeName>
    <alternativeName>
        <fullName>Core protein II</fullName>
    </alternativeName>
    <alternativeName>
        <fullName>Cytochrome b-c1 complex subunit 2-2, mitochondrial</fullName>
    </alternativeName>
    <alternativeName>
        <fullName evidence="8">Inactive zinc metalloprotease alpha-2</fullName>
    </alternativeName>
    <alternativeName>
        <fullName>Ubiquinol-cytochrome c oxidoreductase core protein 2-2</fullName>
    </alternativeName>
</protein>
<dbReference type="EMBL" id="AC001645">
    <property type="protein sequence ID" value="AAB63629.1"/>
    <property type="molecule type" value="Genomic_DNA"/>
</dbReference>
<dbReference type="EMBL" id="AP000373">
    <property type="protein sequence ID" value="BAB01147.1"/>
    <property type="molecule type" value="Genomic_DNA"/>
</dbReference>
<dbReference type="EMBL" id="CP002686">
    <property type="protein sequence ID" value="AEE75825.1"/>
    <property type="molecule type" value="Genomic_DNA"/>
</dbReference>
<dbReference type="EMBL" id="AY035171">
    <property type="protein sequence ID" value="AAK59675.1"/>
    <property type="molecule type" value="mRNA"/>
</dbReference>
<dbReference type="EMBL" id="AY142643">
    <property type="protein sequence ID" value="AAN13101.1"/>
    <property type="molecule type" value="mRNA"/>
</dbReference>
<dbReference type="EMBL" id="AK317606">
    <property type="protein sequence ID" value="BAH20269.1"/>
    <property type="molecule type" value="mRNA"/>
</dbReference>
<dbReference type="SMR" id="O04308"/>
<dbReference type="BioGRID" id="6230">
    <property type="interactions" value="5"/>
</dbReference>
<dbReference type="FunCoup" id="O04308">
    <property type="interactions" value="4744"/>
</dbReference>
<dbReference type="STRING" id="3702.O04308"/>
<dbReference type="iPTMnet" id="O04308"/>
<dbReference type="SwissPalm" id="O04308"/>
<dbReference type="PaxDb" id="3702-AT3G16480.1"/>
<dbReference type="ProteomicsDB" id="250952"/>
<dbReference type="EnsemblPlants" id="AT3G16480.1">
    <property type="protein sequence ID" value="AT3G16480.1"/>
    <property type="gene ID" value="AT3G16480"/>
</dbReference>
<dbReference type="Gramene" id="AT3G16480.1">
    <property type="protein sequence ID" value="AT3G16480.1"/>
    <property type="gene ID" value="AT3G16480"/>
</dbReference>
<dbReference type="KEGG" id="ath:AT3G16480"/>
<dbReference type="Araport" id="AT3G16480"/>
<dbReference type="TAIR" id="AT3G16480">
    <property type="gene designation" value="MPPALPHA"/>
</dbReference>
<dbReference type="eggNOG" id="KOG2067">
    <property type="taxonomic scope" value="Eukaryota"/>
</dbReference>
<dbReference type="HOGENOM" id="CLU_009902_5_1_1"/>
<dbReference type="InParanoid" id="O04308"/>
<dbReference type="OMA" id="QFQSCTA"/>
<dbReference type="PhylomeDB" id="O04308"/>
<dbReference type="BioCyc" id="ARA:AT3G16480-MONOMER"/>
<dbReference type="BioCyc" id="MetaCyc:AT3G16480-MONOMER"/>
<dbReference type="PRO" id="PR:O04308"/>
<dbReference type="Proteomes" id="UP000006548">
    <property type="component" value="Chromosome 3"/>
</dbReference>
<dbReference type="ExpressionAtlas" id="O04308">
    <property type="expression patterns" value="baseline and differential"/>
</dbReference>
<dbReference type="GO" id="GO:0009507">
    <property type="term" value="C:chloroplast"/>
    <property type="evidence" value="ECO:0000314"/>
    <property type="project" value="TAIR"/>
</dbReference>
<dbReference type="GO" id="GO:0009570">
    <property type="term" value="C:chloroplast stroma"/>
    <property type="evidence" value="ECO:0007669"/>
    <property type="project" value="UniProtKB-SubCell"/>
</dbReference>
<dbReference type="GO" id="GO:0005829">
    <property type="term" value="C:cytosol"/>
    <property type="evidence" value="ECO:0007005"/>
    <property type="project" value="TAIR"/>
</dbReference>
<dbReference type="GO" id="GO:0005743">
    <property type="term" value="C:mitochondrial inner membrane"/>
    <property type="evidence" value="ECO:0007005"/>
    <property type="project" value="TAIR"/>
</dbReference>
<dbReference type="GO" id="GO:0005758">
    <property type="term" value="C:mitochondrial intermembrane space"/>
    <property type="evidence" value="ECO:0007005"/>
    <property type="project" value="TAIR"/>
</dbReference>
<dbReference type="GO" id="GO:0005759">
    <property type="term" value="C:mitochondrial matrix"/>
    <property type="evidence" value="ECO:0007005"/>
    <property type="project" value="TAIR"/>
</dbReference>
<dbReference type="GO" id="GO:0005741">
    <property type="term" value="C:mitochondrial outer membrane"/>
    <property type="evidence" value="ECO:0007005"/>
    <property type="project" value="TAIR"/>
</dbReference>
<dbReference type="GO" id="GO:0005739">
    <property type="term" value="C:mitochondrion"/>
    <property type="evidence" value="ECO:0000314"/>
    <property type="project" value="TAIR"/>
</dbReference>
<dbReference type="GO" id="GO:0000325">
    <property type="term" value="C:plant-type vacuole"/>
    <property type="evidence" value="ECO:0007005"/>
    <property type="project" value="TAIR"/>
</dbReference>
<dbReference type="GO" id="GO:0046872">
    <property type="term" value="F:metal ion binding"/>
    <property type="evidence" value="ECO:0007669"/>
    <property type="project" value="InterPro"/>
</dbReference>
<dbReference type="GO" id="GO:0004222">
    <property type="term" value="F:metalloendopeptidase activity"/>
    <property type="evidence" value="ECO:0007669"/>
    <property type="project" value="InterPro"/>
</dbReference>
<dbReference type="GO" id="GO:0006508">
    <property type="term" value="P:proteolysis"/>
    <property type="evidence" value="ECO:0007669"/>
    <property type="project" value="InterPro"/>
</dbReference>
<dbReference type="FunFam" id="3.30.830.10:FF:000022">
    <property type="entry name" value="mitochondrial-processing peptidase subunit alpha"/>
    <property type="match status" value="1"/>
</dbReference>
<dbReference type="FunFam" id="3.30.830.10:FF:000008">
    <property type="entry name" value="Mitochondrial-processing peptidase subunit beta"/>
    <property type="match status" value="1"/>
</dbReference>
<dbReference type="Gene3D" id="3.30.830.10">
    <property type="entry name" value="Metalloenzyme, LuxS/M16 peptidase-like"/>
    <property type="match status" value="2"/>
</dbReference>
<dbReference type="InterPro" id="IPR011249">
    <property type="entry name" value="Metalloenz_LuxS/M16"/>
</dbReference>
<dbReference type="InterPro" id="IPR050361">
    <property type="entry name" value="MPP/UQCRC_Complex"/>
</dbReference>
<dbReference type="InterPro" id="IPR011765">
    <property type="entry name" value="Pept_M16_N"/>
</dbReference>
<dbReference type="InterPro" id="IPR001431">
    <property type="entry name" value="Pept_M16_Zn_BS"/>
</dbReference>
<dbReference type="InterPro" id="IPR007863">
    <property type="entry name" value="Peptidase_M16_C"/>
</dbReference>
<dbReference type="PANTHER" id="PTHR11851">
    <property type="entry name" value="METALLOPROTEASE"/>
    <property type="match status" value="1"/>
</dbReference>
<dbReference type="PANTHER" id="PTHR11851:SF194">
    <property type="entry name" value="MITOCHONDRIAL-PROCESSING PEPTIDASE SUBUNIT ALPHA-2, CHLOROPLASTIC_MITOCHONDRIAL-RELATED"/>
    <property type="match status" value="1"/>
</dbReference>
<dbReference type="Pfam" id="PF00675">
    <property type="entry name" value="Peptidase_M16"/>
    <property type="match status" value="1"/>
</dbReference>
<dbReference type="Pfam" id="PF05193">
    <property type="entry name" value="Peptidase_M16_C"/>
    <property type="match status" value="1"/>
</dbReference>
<dbReference type="SUPFAM" id="SSF63411">
    <property type="entry name" value="LuxS/MPP-like metallohydrolase"/>
    <property type="match status" value="2"/>
</dbReference>
<dbReference type="PROSITE" id="PS00143">
    <property type="entry name" value="INSULINASE"/>
    <property type="match status" value="1"/>
</dbReference>